<protein>
    <recommendedName>
        <fullName evidence="1">Phosphate acyltransferase</fullName>
        <ecNumber evidence="1">2.3.1.274</ecNumber>
    </recommendedName>
    <alternativeName>
        <fullName evidence="1">Acyl-ACP phosphotransacylase</fullName>
    </alternativeName>
    <alternativeName>
        <fullName evidence="1">Acyl-[acyl-carrier-protein]--phosphate acyltransferase</fullName>
    </alternativeName>
    <alternativeName>
        <fullName evidence="1">Phosphate-acyl-ACP acyltransferase</fullName>
    </alternativeName>
</protein>
<dbReference type="EC" id="2.3.1.274" evidence="1"/>
<dbReference type="EMBL" id="AP008232">
    <property type="protein sequence ID" value="BAE74332.1"/>
    <property type="molecule type" value="Genomic_DNA"/>
</dbReference>
<dbReference type="RefSeq" id="WP_011410917.1">
    <property type="nucleotide sequence ID" value="NC_007712.1"/>
</dbReference>
<dbReference type="SMR" id="Q2NU43"/>
<dbReference type="STRING" id="343509.SG1057"/>
<dbReference type="KEGG" id="sgl:SG1057"/>
<dbReference type="eggNOG" id="COG0416">
    <property type="taxonomic scope" value="Bacteria"/>
</dbReference>
<dbReference type="HOGENOM" id="CLU_039379_1_0_6"/>
<dbReference type="OrthoDB" id="9806408at2"/>
<dbReference type="UniPathway" id="UPA00085"/>
<dbReference type="Proteomes" id="UP000001932">
    <property type="component" value="Chromosome"/>
</dbReference>
<dbReference type="GO" id="GO:0005737">
    <property type="term" value="C:cytoplasm"/>
    <property type="evidence" value="ECO:0007669"/>
    <property type="project" value="UniProtKB-SubCell"/>
</dbReference>
<dbReference type="GO" id="GO:0043811">
    <property type="term" value="F:phosphate:acyl-[acyl carrier protein] acyltransferase activity"/>
    <property type="evidence" value="ECO:0007669"/>
    <property type="project" value="UniProtKB-UniRule"/>
</dbReference>
<dbReference type="GO" id="GO:0006633">
    <property type="term" value="P:fatty acid biosynthetic process"/>
    <property type="evidence" value="ECO:0007669"/>
    <property type="project" value="UniProtKB-UniRule"/>
</dbReference>
<dbReference type="GO" id="GO:0008654">
    <property type="term" value="P:phospholipid biosynthetic process"/>
    <property type="evidence" value="ECO:0007669"/>
    <property type="project" value="UniProtKB-KW"/>
</dbReference>
<dbReference type="FunFam" id="3.40.718.10:FF:000008">
    <property type="entry name" value="Phosphate acyltransferase"/>
    <property type="match status" value="1"/>
</dbReference>
<dbReference type="Gene3D" id="3.40.718.10">
    <property type="entry name" value="Isopropylmalate Dehydrogenase"/>
    <property type="match status" value="1"/>
</dbReference>
<dbReference type="HAMAP" id="MF_00019">
    <property type="entry name" value="PlsX"/>
    <property type="match status" value="1"/>
</dbReference>
<dbReference type="InterPro" id="IPR003664">
    <property type="entry name" value="FA_synthesis"/>
</dbReference>
<dbReference type="InterPro" id="IPR012281">
    <property type="entry name" value="Phospholipid_synth_PlsX-like"/>
</dbReference>
<dbReference type="NCBIfam" id="TIGR00182">
    <property type="entry name" value="plsX"/>
    <property type="match status" value="1"/>
</dbReference>
<dbReference type="PANTHER" id="PTHR30100">
    <property type="entry name" value="FATTY ACID/PHOSPHOLIPID SYNTHESIS PROTEIN PLSX"/>
    <property type="match status" value="1"/>
</dbReference>
<dbReference type="PANTHER" id="PTHR30100:SF1">
    <property type="entry name" value="PHOSPHATE ACYLTRANSFERASE"/>
    <property type="match status" value="1"/>
</dbReference>
<dbReference type="Pfam" id="PF02504">
    <property type="entry name" value="FA_synthesis"/>
    <property type="match status" value="1"/>
</dbReference>
<dbReference type="PIRSF" id="PIRSF002465">
    <property type="entry name" value="Phsphlp_syn_PlsX"/>
    <property type="match status" value="1"/>
</dbReference>
<dbReference type="SUPFAM" id="SSF53659">
    <property type="entry name" value="Isocitrate/Isopropylmalate dehydrogenase-like"/>
    <property type="match status" value="1"/>
</dbReference>
<sequence>MRRLTLALDAMGGDFGPAVTVPAALQALVSYPQLELLLVGNPAAIHSLLVKTDSVLLERLTVIPAESVITSDAKPSQAIRASRGTSMRVALELIRDGRAQACVSAGNTGALMGLAKLVLKPLDGIERPALMVVLPHKKQGKTVVLDLGANVACDGAMLAQFAVMGSVMAEHIVGVTNPRVALLNIGEEETKGLDPIQHAAVLLRDVQSINYIGYLEANELLTGKTDVLVCDGFVGNVTLKTMEGVIRVFLSLLKSSGESGRQGWLMQWVKRWMKRRLMRQFGQLNPDQYNGACLIGLRGTVIKSHGAANQRAFTAAIEQAMQAVERQIPERIAARLDAVLPKSD</sequence>
<feature type="chain" id="PRO_1000001834" description="Phosphate acyltransferase">
    <location>
        <begin position="1"/>
        <end position="344"/>
    </location>
</feature>
<keyword id="KW-0963">Cytoplasm</keyword>
<keyword id="KW-0444">Lipid biosynthesis</keyword>
<keyword id="KW-0443">Lipid metabolism</keyword>
<keyword id="KW-0594">Phospholipid biosynthesis</keyword>
<keyword id="KW-1208">Phospholipid metabolism</keyword>
<keyword id="KW-0808">Transferase</keyword>
<organism>
    <name type="scientific">Sodalis glossinidius (strain morsitans)</name>
    <dbReference type="NCBI Taxonomy" id="343509"/>
    <lineage>
        <taxon>Bacteria</taxon>
        <taxon>Pseudomonadati</taxon>
        <taxon>Pseudomonadota</taxon>
        <taxon>Gammaproteobacteria</taxon>
        <taxon>Enterobacterales</taxon>
        <taxon>Bruguierivoracaceae</taxon>
        <taxon>Sodalis</taxon>
    </lineage>
</organism>
<accession>Q2NU43</accession>
<proteinExistence type="inferred from homology"/>
<reference key="1">
    <citation type="journal article" date="2006" name="Genome Res.">
        <title>Massive genome erosion and functional adaptations provide insights into the symbiotic lifestyle of Sodalis glossinidius in the tsetse host.</title>
        <authorList>
            <person name="Toh H."/>
            <person name="Weiss B.L."/>
            <person name="Perkin S.A.H."/>
            <person name="Yamashita A."/>
            <person name="Oshima K."/>
            <person name="Hattori M."/>
            <person name="Aksoy S."/>
        </authorList>
    </citation>
    <scope>NUCLEOTIDE SEQUENCE [LARGE SCALE GENOMIC DNA]</scope>
    <source>
        <strain>morsitans</strain>
    </source>
</reference>
<gene>
    <name evidence="1" type="primary">plsX</name>
    <name type="ordered locus">SG1057</name>
</gene>
<name>PLSX_SODGM</name>
<evidence type="ECO:0000255" key="1">
    <source>
        <dbReference type="HAMAP-Rule" id="MF_00019"/>
    </source>
</evidence>
<comment type="function">
    <text evidence="1">Catalyzes the reversible formation of acyl-phosphate (acyl-PO(4)) from acyl-[acyl-carrier-protein] (acyl-ACP). This enzyme utilizes acyl-ACP as fatty acyl donor, but not acyl-CoA.</text>
</comment>
<comment type="catalytic activity">
    <reaction evidence="1">
        <text>a fatty acyl-[ACP] + phosphate = an acyl phosphate + holo-[ACP]</text>
        <dbReference type="Rhea" id="RHEA:42292"/>
        <dbReference type="Rhea" id="RHEA-COMP:9685"/>
        <dbReference type="Rhea" id="RHEA-COMP:14125"/>
        <dbReference type="ChEBI" id="CHEBI:43474"/>
        <dbReference type="ChEBI" id="CHEBI:59918"/>
        <dbReference type="ChEBI" id="CHEBI:64479"/>
        <dbReference type="ChEBI" id="CHEBI:138651"/>
        <dbReference type="EC" id="2.3.1.274"/>
    </reaction>
</comment>
<comment type="pathway">
    <text evidence="1">Lipid metabolism; phospholipid metabolism.</text>
</comment>
<comment type="subunit">
    <text evidence="1">Homodimer. Probably interacts with PlsY.</text>
</comment>
<comment type="subcellular location">
    <subcellularLocation>
        <location evidence="1">Cytoplasm</location>
    </subcellularLocation>
    <text evidence="1">Associated with the membrane possibly through PlsY.</text>
</comment>
<comment type="similarity">
    <text evidence="1">Belongs to the PlsX family.</text>
</comment>